<gene>
    <name evidence="1" type="primary">uvrB</name>
    <name type="ordered locus">MTH_442</name>
</gene>
<feature type="chain" id="PRO_0000138456" description="UvrABC system protein B">
    <location>
        <begin position="1"/>
        <end position="646"/>
    </location>
</feature>
<feature type="domain" description="Helicase ATP-binding" evidence="1">
    <location>
        <begin position="25"/>
        <end position="412"/>
    </location>
</feature>
<feature type="domain" description="Helicase C-terminal" evidence="1">
    <location>
        <begin position="428"/>
        <end position="594"/>
    </location>
</feature>
<feature type="domain" description="UVR" evidence="1">
    <location>
        <begin position="611"/>
        <end position="646"/>
    </location>
</feature>
<feature type="short sequence motif" description="Beta-hairpin">
    <location>
        <begin position="91"/>
        <end position="114"/>
    </location>
</feature>
<feature type="binding site" evidence="1">
    <location>
        <begin position="38"/>
        <end position="45"/>
    </location>
    <ligand>
        <name>ATP</name>
        <dbReference type="ChEBI" id="CHEBI:30616"/>
    </ligand>
</feature>
<proteinExistence type="inferred from homology"/>
<keyword id="KW-0067">ATP-binding</keyword>
<keyword id="KW-0963">Cytoplasm</keyword>
<keyword id="KW-0227">DNA damage</keyword>
<keyword id="KW-0228">DNA excision</keyword>
<keyword id="KW-0234">DNA repair</keyword>
<keyword id="KW-0267">Excision nuclease</keyword>
<keyword id="KW-0547">Nucleotide-binding</keyword>
<keyword id="KW-1185">Reference proteome</keyword>
<keyword id="KW-0742">SOS response</keyword>
<protein>
    <recommendedName>
        <fullName evidence="1">UvrABC system protein B</fullName>
        <shortName evidence="1">Protein UvrB</shortName>
    </recommendedName>
    <alternativeName>
        <fullName evidence="1">Excinuclease ABC subunit B</fullName>
    </alternativeName>
</protein>
<reference key="1">
    <citation type="journal article" date="1997" name="J. Bacteriol.">
        <title>Complete genome sequence of Methanobacterium thermoautotrophicum deltaH: functional analysis and comparative genomics.</title>
        <authorList>
            <person name="Smith D.R."/>
            <person name="Doucette-Stamm L.A."/>
            <person name="Deloughery C."/>
            <person name="Lee H.-M."/>
            <person name="Dubois J."/>
            <person name="Aldredge T."/>
            <person name="Bashirzadeh R."/>
            <person name="Blakely D."/>
            <person name="Cook R."/>
            <person name="Gilbert K."/>
            <person name="Harrison D."/>
            <person name="Hoang L."/>
            <person name="Keagle P."/>
            <person name="Lumm W."/>
            <person name="Pothier B."/>
            <person name="Qiu D."/>
            <person name="Spadafora R."/>
            <person name="Vicare R."/>
            <person name="Wang Y."/>
            <person name="Wierzbowski J."/>
            <person name="Gibson R."/>
            <person name="Jiwani N."/>
            <person name="Caruso A."/>
            <person name="Bush D."/>
            <person name="Safer H."/>
            <person name="Patwell D."/>
            <person name="Prabhakar S."/>
            <person name="McDougall S."/>
            <person name="Shimer G."/>
            <person name="Goyal A."/>
            <person name="Pietrovski S."/>
            <person name="Church G.M."/>
            <person name="Daniels C.J."/>
            <person name="Mao J.-I."/>
            <person name="Rice P."/>
            <person name="Noelling J."/>
            <person name="Reeve J.N."/>
        </authorList>
    </citation>
    <scope>NUCLEOTIDE SEQUENCE [LARGE SCALE GENOMIC DNA]</scope>
    <source>
        <strain>ATCC 29096 / DSM 1053 / JCM 10044 / NBRC 100330 / Delta H</strain>
    </source>
</reference>
<sequence length="646" mass="74563">MMKFKLVSDYRPLGDQPKAIRSLVNGIKAGMREQTLLGVTGSGKTFTVANVIAEVQKPTLVISHNKTLAAQLYEEFREFFPENAVEYFVSYYDFYQPEAYIPQTDTYIDKEASINDEIDRMRHSATQSLLSRDDVIVVSSVSCIYGIGAPTDYGEFTLHLEVGSGPGREEVLEGLINMQYERNDVEFDRGQFRVRGDTVEINPIHGTPPIRIEFFGDEIDSISTVHRVTGRRIQKLDRVTIFPAKHFVIPEDRLQRAIESIEAELEERLTELRSQNKLLEAQRLEQRTRFDMEMLREMGYCQGIENYSMHLSGRKWGEKPNTLLDYFPEDFLTVIDESHVTVPQIRGMYNGDRARKDTLVEYGFRLPSARENRPLRFDEFQESVNQVIYVSATPGRYELSRSQNIVEQIIRPTGLVDPEVRIRPVKGQVDDLLSEIRRRVERGERVLVTTLTKRMAEDLTDYYSRVGVKVRYLHSEIDTLERVEIIDDLRRGEFDCLVGVNLLREGLDLPEVALVAILDADKEGFLRSETSLIQTIGRAARNVNGEVLIYAGRFTDSVMAAVETTNRRRKLQMEYNRRHGIKPRSTRRTLREEEGPLRNLKVDEIPDHELELIIKDLEAEMRDAARNLEFERAARIRDRIMSLKSN</sequence>
<organism>
    <name type="scientific">Methanothermobacter thermautotrophicus (strain ATCC 29096 / DSM 1053 / JCM 10044 / NBRC 100330 / Delta H)</name>
    <name type="common">Methanobacterium thermoautotrophicum</name>
    <dbReference type="NCBI Taxonomy" id="187420"/>
    <lineage>
        <taxon>Archaea</taxon>
        <taxon>Methanobacteriati</taxon>
        <taxon>Methanobacteriota</taxon>
        <taxon>Methanomada group</taxon>
        <taxon>Methanobacteria</taxon>
        <taxon>Methanobacteriales</taxon>
        <taxon>Methanobacteriaceae</taxon>
        <taxon>Methanothermobacter</taxon>
    </lineage>
</organism>
<accession>O26542</accession>
<name>UVRB_METTH</name>
<dbReference type="EMBL" id="AE000666">
    <property type="protein sequence ID" value="AAB84948.1"/>
    <property type="molecule type" value="Genomic_DNA"/>
</dbReference>
<dbReference type="PIR" id="G69157">
    <property type="entry name" value="G69157"/>
</dbReference>
<dbReference type="RefSeq" id="WP_010876081.1">
    <property type="nucleotide sequence ID" value="NC_000916.1"/>
</dbReference>
<dbReference type="SMR" id="O26542"/>
<dbReference type="STRING" id="187420.MTH_442"/>
<dbReference type="PaxDb" id="187420-MTH_442"/>
<dbReference type="EnsemblBacteria" id="AAB84948">
    <property type="protein sequence ID" value="AAB84948"/>
    <property type="gene ID" value="MTH_442"/>
</dbReference>
<dbReference type="GeneID" id="1470403"/>
<dbReference type="KEGG" id="mth:MTH_442"/>
<dbReference type="PATRIC" id="fig|187420.15.peg.412"/>
<dbReference type="HOGENOM" id="CLU_009621_2_1_2"/>
<dbReference type="InParanoid" id="O26542"/>
<dbReference type="Proteomes" id="UP000005223">
    <property type="component" value="Chromosome"/>
</dbReference>
<dbReference type="GO" id="GO:0005737">
    <property type="term" value="C:cytoplasm"/>
    <property type="evidence" value="ECO:0007669"/>
    <property type="project" value="UniProtKB-SubCell"/>
</dbReference>
<dbReference type="GO" id="GO:0009380">
    <property type="term" value="C:excinuclease repair complex"/>
    <property type="evidence" value="ECO:0007669"/>
    <property type="project" value="InterPro"/>
</dbReference>
<dbReference type="GO" id="GO:0005524">
    <property type="term" value="F:ATP binding"/>
    <property type="evidence" value="ECO:0007669"/>
    <property type="project" value="UniProtKB-UniRule"/>
</dbReference>
<dbReference type="GO" id="GO:0016887">
    <property type="term" value="F:ATP hydrolysis activity"/>
    <property type="evidence" value="ECO:0007669"/>
    <property type="project" value="InterPro"/>
</dbReference>
<dbReference type="GO" id="GO:0003677">
    <property type="term" value="F:DNA binding"/>
    <property type="evidence" value="ECO:0007669"/>
    <property type="project" value="UniProtKB-UniRule"/>
</dbReference>
<dbReference type="GO" id="GO:0009381">
    <property type="term" value="F:excinuclease ABC activity"/>
    <property type="evidence" value="ECO:0007669"/>
    <property type="project" value="UniProtKB-UniRule"/>
</dbReference>
<dbReference type="GO" id="GO:0006289">
    <property type="term" value="P:nucleotide-excision repair"/>
    <property type="evidence" value="ECO:0007669"/>
    <property type="project" value="UniProtKB-UniRule"/>
</dbReference>
<dbReference type="GO" id="GO:0009432">
    <property type="term" value="P:SOS response"/>
    <property type="evidence" value="ECO:0007669"/>
    <property type="project" value="UniProtKB-UniRule"/>
</dbReference>
<dbReference type="CDD" id="cd17916">
    <property type="entry name" value="DEXHc_UvrB"/>
    <property type="match status" value="1"/>
</dbReference>
<dbReference type="CDD" id="cd18790">
    <property type="entry name" value="SF2_C_UvrB"/>
    <property type="match status" value="1"/>
</dbReference>
<dbReference type="Gene3D" id="3.40.50.300">
    <property type="entry name" value="P-loop containing nucleotide triphosphate hydrolases"/>
    <property type="match status" value="3"/>
</dbReference>
<dbReference type="Gene3D" id="4.10.860.10">
    <property type="entry name" value="UVR domain"/>
    <property type="match status" value="1"/>
</dbReference>
<dbReference type="HAMAP" id="MF_00204">
    <property type="entry name" value="UvrB"/>
    <property type="match status" value="1"/>
</dbReference>
<dbReference type="InterPro" id="IPR006935">
    <property type="entry name" value="Helicase/UvrB_N"/>
</dbReference>
<dbReference type="InterPro" id="IPR014001">
    <property type="entry name" value="Helicase_ATP-bd"/>
</dbReference>
<dbReference type="InterPro" id="IPR001650">
    <property type="entry name" value="Helicase_C-like"/>
</dbReference>
<dbReference type="InterPro" id="IPR027417">
    <property type="entry name" value="P-loop_NTPase"/>
</dbReference>
<dbReference type="InterPro" id="IPR001943">
    <property type="entry name" value="UVR_dom"/>
</dbReference>
<dbReference type="InterPro" id="IPR036876">
    <property type="entry name" value="UVR_dom_sf"/>
</dbReference>
<dbReference type="InterPro" id="IPR004807">
    <property type="entry name" value="UvrB"/>
</dbReference>
<dbReference type="InterPro" id="IPR041471">
    <property type="entry name" value="UvrB_inter"/>
</dbReference>
<dbReference type="InterPro" id="IPR024759">
    <property type="entry name" value="UvrB_YAD/RRR_dom"/>
</dbReference>
<dbReference type="NCBIfam" id="NF003673">
    <property type="entry name" value="PRK05298.1"/>
    <property type="match status" value="1"/>
</dbReference>
<dbReference type="NCBIfam" id="TIGR00631">
    <property type="entry name" value="uvrb"/>
    <property type="match status" value="1"/>
</dbReference>
<dbReference type="PANTHER" id="PTHR24029">
    <property type="entry name" value="UVRABC SYSTEM PROTEIN B"/>
    <property type="match status" value="1"/>
</dbReference>
<dbReference type="PANTHER" id="PTHR24029:SF0">
    <property type="entry name" value="UVRABC SYSTEM PROTEIN B"/>
    <property type="match status" value="1"/>
</dbReference>
<dbReference type="Pfam" id="PF00271">
    <property type="entry name" value="Helicase_C"/>
    <property type="match status" value="1"/>
</dbReference>
<dbReference type="Pfam" id="PF04851">
    <property type="entry name" value="ResIII"/>
    <property type="match status" value="1"/>
</dbReference>
<dbReference type="Pfam" id="PF02151">
    <property type="entry name" value="UVR"/>
    <property type="match status" value="1"/>
</dbReference>
<dbReference type="Pfam" id="PF12344">
    <property type="entry name" value="UvrB"/>
    <property type="match status" value="1"/>
</dbReference>
<dbReference type="Pfam" id="PF17757">
    <property type="entry name" value="UvrB_inter"/>
    <property type="match status" value="1"/>
</dbReference>
<dbReference type="SMART" id="SM00487">
    <property type="entry name" value="DEXDc"/>
    <property type="match status" value="1"/>
</dbReference>
<dbReference type="SMART" id="SM00490">
    <property type="entry name" value="HELICc"/>
    <property type="match status" value="1"/>
</dbReference>
<dbReference type="SUPFAM" id="SSF46600">
    <property type="entry name" value="C-terminal UvrC-binding domain of UvrB"/>
    <property type="match status" value="1"/>
</dbReference>
<dbReference type="SUPFAM" id="SSF52540">
    <property type="entry name" value="P-loop containing nucleoside triphosphate hydrolases"/>
    <property type="match status" value="2"/>
</dbReference>
<dbReference type="PROSITE" id="PS51192">
    <property type="entry name" value="HELICASE_ATP_BIND_1"/>
    <property type="match status" value="1"/>
</dbReference>
<dbReference type="PROSITE" id="PS51194">
    <property type="entry name" value="HELICASE_CTER"/>
    <property type="match status" value="1"/>
</dbReference>
<dbReference type="PROSITE" id="PS50151">
    <property type="entry name" value="UVR"/>
    <property type="match status" value="1"/>
</dbReference>
<evidence type="ECO:0000255" key="1">
    <source>
        <dbReference type="HAMAP-Rule" id="MF_00204"/>
    </source>
</evidence>
<comment type="function">
    <text evidence="1">The UvrABC repair system catalyzes the recognition and processing of DNA lesions. A damage recognition complex composed of 2 UvrA and 2 UvrB subunits scans DNA for abnormalities. Upon binding of the UvrA(2)B(2) complex to a putative damaged site, the DNA wraps around one UvrB monomer. DNA wrap is dependent on ATP binding by UvrB and probably causes local melting of the DNA helix, facilitating insertion of UvrB beta-hairpin between the DNA strands. Then UvrB probes one DNA strand for the presence of a lesion. If a lesion is found the UvrA subunits dissociate and the UvrB-DNA preincision complex is formed. This complex is subsequently bound by UvrC and the second UvrB is released. If no lesion is found, the DNA wraps around the other UvrB subunit that will check the other stand for damage.</text>
</comment>
<comment type="subunit">
    <text evidence="1">Forms a heterotetramer with UvrA during the search for lesions. Interacts with UvrC in an incision complex.</text>
</comment>
<comment type="subcellular location">
    <subcellularLocation>
        <location evidence="1">Cytoplasm</location>
    </subcellularLocation>
</comment>
<comment type="domain">
    <text evidence="1">The beta-hairpin motif is involved in DNA binding.</text>
</comment>
<comment type="similarity">
    <text evidence="1">Belongs to the UvrB family.</text>
</comment>